<dbReference type="EMBL" id="DP000874">
    <property type="protein sequence ID" value="ACH99683.1"/>
    <property type="molecule type" value="Genomic_DNA"/>
</dbReference>
<dbReference type="RefSeq" id="XP_003797117.1">
    <property type="nucleotide sequence ID" value="XM_003797069.3"/>
</dbReference>
<dbReference type="SMR" id="B5SNH4"/>
<dbReference type="FunCoup" id="B5SNH4">
    <property type="interactions" value="2576"/>
</dbReference>
<dbReference type="STRING" id="30611.ENSOGAP00000015351"/>
<dbReference type="Ensembl" id="ENSOGAT00000017142.2">
    <property type="protein sequence ID" value="ENSOGAP00000015351.2"/>
    <property type="gene ID" value="ENSOGAG00000017137.2"/>
</dbReference>
<dbReference type="GeneID" id="100948126"/>
<dbReference type="KEGG" id="oga:100948126"/>
<dbReference type="CTD" id="54069"/>
<dbReference type="eggNOG" id="ENOG502S9R8">
    <property type="taxonomic scope" value="Eukaryota"/>
</dbReference>
<dbReference type="GeneTree" id="ENSGT00940000154267"/>
<dbReference type="HOGENOM" id="CLU_101031_0_0_1"/>
<dbReference type="InParanoid" id="B5SNH4"/>
<dbReference type="OMA" id="EMKMLVM"/>
<dbReference type="OrthoDB" id="74210at2759"/>
<dbReference type="TreeFam" id="TF333200"/>
<dbReference type="Proteomes" id="UP000005225">
    <property type="component" value="Unassembled WGS sequence"/>
</dbReference>
<dbReference type="GO" id="GO:0098654">
    <property type="term" value="C:CENP-A recruiting complex"/>
    <property type="evidence" value="ECO:0007669"/>
    <property type="project" value="Ensembl"/>
</dbReference>
<dbReference type="GO" id="GO:0000785">
    <property type="term" value="C:chromatin"/>
    <property type="evidence" value="ECO:0007669"/>
    <property type="project" value="TreeGrafter"/>
</dbReference>
<dbReference type="GO" id="GO:0000775">
    <property type="term" value="C:chromosome, centromeric region"/>
    <property type="evidence" value="ECO:0007669"/>
    <property type="project" value="UniProtKB-SubCell"/>
</dbReference>
<dbReference type="GO" id="GO:0005829">
    <property type="term" value="C:cytosol"/>
    <property type="evidence" value="ECO:0007669"/>
    <property type="project" value="Ensembl"/>
</dbReference>
<dbReference type="GO" id="GO:0005654">
    <property type="term" value="C:nucleoplasm"/>
    <property type="evidence" value="ECO:0007669"/>
    <property type="project" value="Ensembl"/>
</dbReference>
<dbReference type="GO" id="GO:0042802">
    <property type="term" value="F:identical protein binding"/>
    <property type="evidence" value="ECO:0007669"/>
    <property type="project" value="Ensembl"/>
</dbReference>
<dbReference type="GO" id="GO:0046872">
    <property type="term" value="F:metal ion binding"/>
    <property type="evidence" value="ECO:0007669"/>
    <property type="project" value="UniProtKB-KW"/>
</dbReference>
<dbReference type="GO" id="GO:0030674">
    <property type="term" value="F:protein-macromolecule adaptor activity"/>
    <property type="evidence" value="ECO:0007669"/>
    <property type="project" value="Ensembl"/>
</dbReference>
<dbReference type="GO" id="GO:0051301">
    <property type="term" value="P:cell division"/>
    <property type="evidence" value="ECO:0007669"/>
    <property type="project" value="UniProtKB-KW"/>
</dbReference>
<dbReference type="GO" id="GO:0034080">
    <property type="term" value="P:CENP-A containing chromatin assembly"/>
    <property type="evidence" value="ECO:0007669"/>
    <property type="project" value="Ensembl"/>
</dbReference>
<dbReference type="GO" id="GO:0007059">
    <property type="term" value="P:chromosome segregation"/>
    <property type="evidence" value="ECO:0007669"/>
    <property type="project" value="Ensembl"/>
</dbReference>
<dbReference type="GO" id="GO:0140462">
    <property type="term" value="P:pericentric heterochromatin organization"/>
    <property type="evidence" value="ECO:0007669"/>
    <property type="project" value="Ensembl"/>
</dbReference>
<dbReference type="GO" id="GO:0071459">
    <property type="term" value="P:protein localization to chromosome, centromeric region"/>
    <property type="evidence" value="ECO:0007669"/>
    <property type="project" value="Ensembl"/>
</dbReference>
<dbReference type="InterPro" id="IPR034752">
    <property type="entry name" value="Mis18"/>
</dbReference>
<dbReference type="InterPro" id="IPR004910">
    <property type="entry name" value="Yippee/Mis18/Cereblon"/>
</dbReference>
<dbReference type="PANTHER" id="PTHR16431">
    <property type="entry name" value="NEUROGENIC PROTEIN MASTERMIND"/>
    <property type="match status" value="1"/>
</dbReference>
<dbReference type="PANTHER" id="PTHR16431:SF2">
    <property type="entry name" value="PROTEIN MIS18-ALPHA"/>
    <property type="match status" value="1"/>
</dbReference>
<dbReference type="Pfam" id="PF03226">
    <property type="entry name" value="Yippee-Mis18"/>
    <property type="match status" value="1"/>
</dbReference>
<dbReference type="PROSITE" id="PS51793">
    <property type="entry name" value="MIS18"/>
    <property type="match status" value="1"/>
</dbReference>
<keyword id="KW-0131">Cell cycle</keyword>
<keyword id="KW-0132">Cell division</keyword>
<keyword id="KW-0137">Centromere</keyword>
<keyword id="KW-0158">Chromosome</keyword>
<keyword id="KW-1017">Isopeptide bond</keyword>
<keyword id="KW-0479">Metal-binding</keyword>
<keyword id="KW-0498">Mitosis</keyword>
<keyword id="KW-0539">Nucleus</keyword>
<keyword id="KW-0597">Phosphoprotein</keyword>
<keyword id="KW-1185">Reference proteome</keyword>
<keyword id="KW-0832">Ubl conjugation</keyword>
<keyword id="KW-0862">Zinc</keyword>
<evidence type="ECO:0000250" key="1">
    <source>
        <dbReference type="UniProtKB" id="Q9NYP9"/>
    </source>
</evidence>
<evidence type="ECO:0000255" key="2">
    <source>
        <dbReference type="PROSITE-ProRule" id="PRU01129"/>
    </source>
</evidence>
<gene>
    <name type="primary">MIS18A</name>
</gene>
<name>MS18A_OTOGA</name>
<reference key="1">
    <citation type="submission" date="2011-03" db="EMBL/GenBank/DDBJ databases">
        <title>Version 3 of the genome sequence of Otolemur garnettii(Bushbaby).</title>
        <authorList>
            <consortium name="The Broad Institute Genome Sequencing Platform"/>
            <person name="Di Palma F."/>
            <person name="Johnson J."/>
            <person name="Lander E.S."/>
            <person name="Lindblad-Toh K."/>
            <person name="Jaffe D.B."/>
            <person name="Gnerre S."/>
            <person name="MacCallum I."/>
            <person name="Przybylski D."/>
            <person name="Ribeiro F.J."/>
            <person name="Burton J.N."/>
            <person name="Walker B.J."/>
            <person name="Sharpe T."/>
            <person name="Hall G."/>
        </authorList>
    </citation>
    <scope>NUCLEOTIDE SEQUENCE [LARGE SCALE GENOMIC DNA]</scope>
</reference>
<organism>
    <name type="scientific">Otolemur garnettii</name>
    <name type="common">Small-eared galago</name>
    <name type="synonym">Garnett's greater bushbaby</name>
    <dbReference type="NCBI Taxonomy" id="30611"/>
    <lineage>
        <taxon>Eukaryota</taxon>
        <taxon>Metazoa</taxon>
        <taxon>Chordata</taxon>
        <taxon>Craniata</taxon>
        <taxon>Vertebrata</taxon>
        <taxon>Euteleostomi</taxon>
        <taxon>Mammalia</taxon>
        <taxon>Eutheria</taxon>
        <taxon>Euarchontoglires</taxon>
        <taxon>Primates</taxon>
        <taxon>Strepsirrhini</taxon>
        <taxon>Lorisiformes</taxon>
        <taxon>Galagidae</taxon>
        <taxon>Otolemur</taxon>
    </lineage>
</organism>
<accession>B5SNH4</accession>
<comment type="function">
    <text evidence="1">Required for recruitment of CENPA to centromeres and normal chromosome segregation during mitosis.</text>
</comment>
<comment type="subunit">
    <text evidence="1">Homodimer, and heterodimer with OIP5/MIS18B. Identified in a complex containing MIS18A, OIP5/MIS18B, MIS18BP1, RBBP7 and RBBP4.</text>
</comment>
<comment type="subcellular location">
    <subcellularLocation>
        <location evidence="1">Nucleus</location>
    </subcellularLocation>
    <subcellularLocation>
        <location evidence="1">Chromosome</location>
    </subcellularLocation>
    <subcellularLocation>
        <location evidence="1">Chromosome</location>
        <location evidence="1">Centromere</location>
    </subcellularLocation>
    <text evidence="1">Associated with centromeres in interphase cells, from late anaphase to the G1 phase. Not detected on centromeres during earlier phases of mitosis. Associated with chromatin.</text>
</comment>
<comment type="similarity">
    <text evidence="2">Belongs to the mis18 family.</text>
</comment>
<feature type="chain" id="PRO_0000359881" description="Protein Mis18-alpha">
    <location>
        <begin position="1"/>
        <end position="232"/>
    </location>
</feature>
<feature type="domain" description="Mis18" evidence="2">
    <location>
        <begin position="79"/>
        <end position="177"/>
    </location>
</feature>
<feature type="binding site" evidence="2">
    <location>
        <position position="84"/>
    </location>
    <ligand>
        <name>Zn(2+)</name>
        <dbReference type="ChEBI" id="CHEBI:29105"/>
    </ligand>
</feature>
<feature type="binding site" evidence="2">
    <location>
        <position position="87"/>
    </location>
    <ligand>
        <name>Zn(2+)</name>
        <dbReference type="ChEBI" id="CHEBI:29105"/>
    </ligand>
</feature>
<feature type="binding site" evidence="2">
    <location>
        <position position="140"/>
    </location>
    <ligand>
        <name>Zn(2+)</name>
        <dbReference type="ChEBI" id="CHEBI:29105"/>
    </ligand>
</feature>
<feature type="binding site" evidence="2">
    <location>
        <position position="143"/>
    </location>
    <ligand>
        <name>Zn(2+)</name>
        <dbReference type="ChEBI" id="CHEBI:29105"/>
    </ligand>
</feature>
<feature type="modified residue" description="Phosphoserine" evidence="1">
    <location>
        <position position="36"/>
    </location>
</feature>
<feature type="modified residue" description="Phosphoserine" evidence="1">
    <location>
        <position position="39"/>
    </location>
</feature>
<feature type="modified residue" description="Phosphoserine" evidence="1">
    <location>
        <position position="40"/>
    </location>
</feature>
<feature type="modified residue" description="Phosphoserine" evidence="1">
    <location>
        <position position="232"/>
    </location>
</feature>
<feature type="cross-link" description="Glycyl lysine isopeptide (Lys-Gly) (interchain with G-Cter in SUMO2)" evidence="1">
    <location>
        <position position="161"/>
    </location>
</feature>
<sequence length="232" mass="25942">MAGAWSSNCCRGSSTGCMCCNKGKRNDSLLLGKRLSEDSSRQQLLQKWESMWSSTSGDASEGDTEKERLEEAAVAEEKPLVFLCSGCRRPLGDSLSWVTNQEDTNCILLRSVSCNVSVDKEQKLSKREKENGCILETLYCAGCSLNLGYVYRCTPRDLDSKRDLFCLSVEAIESYILGSAEKQIVSEDKELFNLESRVEIEKSLKQMEDVLKALHMKLWEVESKLSFAGSKS</sequence>
<protein>
    <recommendedName>
        <fullName>Protein Mis18-alpha</fullName>
    </recommendedName>
</protein>
<proteinExistence type="inferred from homology"/>